<dbReference type="PIR" id="JU0163">
    <property type="entry name" value="JU0163"/>
</dbReference>
<dbReference type="SMR" id="P18707"/>
<dbReference type="GO" id="GO:0072562">
    <property type="term" value="C:blood microparticle"/>
    <property type="evidence" value="ECO:0007669"/>
    <property type="project" value="TreeGrafter"/>
</dbReference>
<dbReference type="GO" id="GO:0031838">
    <property type="term" value="C:haptoglobin-hemoglobin complex"/>
    <property type="evidence" value="ECO:0007669"/>
    <property type="project" value="TreeGrafter"/>
</dbReference>
<dbReference type="GO" id="GO:0005833">
    <property type="term" value="C:hemoglobin complex"/>
    <property type="evidence" value="ECO:0007669"/>
    <property type="project" value="InterPro"/>
</dbReference>
<dbReference type="GO" id="GO:0031720">
    <property type="term" value="F:haptoglobin binding"/>
    <property type="evidence" value="ECO:0007669"/>
    <property type="project" value="TreeGrafter"/>
</dbReference>
<dbReference type="GO" id="GO:0020037">
    <property type="term" value="F:heme binding"/>
    <property type="evidence" value="ECO:0007669"/>
    <property type="project" value="InterPro"/>
</dbReference>
<dbReference type="GO" id="GO:0031721">
    <property type="term" value="F:hemoglobin alpha binding"/>
    <property type="evidence" value="ECO:0007669"/>
    <property type="project" value="TreeGrafter"/>
</dbReference>
<dbReference type="GO" id="GO:0046872">
    <property type="term" value="F:metal ion binding"/>
    <property type="evidence" value="ECO:0007669"/>
    <property type="project" value="UniProtKB-KW"/>
</dbReference>
<dbReference type="GO" id="GO:0043177">
    <property type="term" value="F:organic acid binding"/>
    <property type="evidence" value="ECO:0007669"/>
    <property type="project" value="TreeGrafter"/>
</dbReference>
<dbReference type="GO" id="GO:0019825">
    <property type="term" value="F:oxygen binding"/>
    <property type="evidence" value="ECO:0007669"/>
    <property type="project" value="InterPro"/>
</dbReference>
<dbReference type="GO" id="GO:0005344">
    <property type="term" value="F:oxygen carrier activity"/>
    <property type="evidence" value="ECO:0007669"/>
    <property type="project" value="UniProtKB-KW"/>
</dbReference>
<dbReference type="GO" id="GO:0004601">
    <property type="term" value="F:peroxidase activity"/>
    <property type="evidence" value="ECO:0007669"/>
    <property type="project" value="TreeGrafter"/>
</dbReference>
<dbReference type="GO" id="GO:0042744">
    <property type="term" value="P:hydrogen peroxide catabolic process"/>
    <property type="evidence" value="ECO:0007669"/>
    <property type="project" value="TreeGrafter"/>
</dbReference>
<dbReference type="CDD" id="cd08925">
    <property type="entry name" value="Hb-beta-like"/>
    <property type="match status" value="1"/>
</dbReference>
<dbReference type="FunFam" id="1.10.490.10:FF:000001">
    <property type="entry name" value="Hemoglobin subunit beta"/>
    <property type="match status" value="1"/>
</dbReference>
<dbReference type="Gene3D" id="1.10.490.10">
    <property type="entry name" value="Globins"/>
    <property type="match status" value="1"/>
</dbReference>
<dbReference type="InterPro" id="IPR000971">
    <property type="entry name" value="Globin"/>
</dbReference>
<dbReference type="InterPro" id="IPR009050">
    <property type="entry name" value="Globin-like_sf"/>
</dbReference>
<dbReference type="InterPro" id="IPR012292">
    <property type="entry name" value="Globin/Proto"/>
</dbReference>
<dbReference type="InterPro" id="IPR002337">
    <property type="entry name" value="Hemoglobin_b"/>
</dbReference>
<dbReference type="InterPro" id="IPR050056">
    <property type="entry name" value="Hemoglobin_oxygen_transport"/>
</dbReference>
<dbReference type="PANTHER" id="PTHR11442">
    <property type="entry name" value="HEMOGLOBIN FAMILY MEMBER"/>
    <property type="match status" value="1"/>
</dbReference>
<dbReference type="PANTHER" id="PTHR11442:SF42">
    <property type="entry name" value="HEMOGLOBIN SUBUNIT BETA"/>
    <property type="match status" value="1"/>
</dbReference>
<dbReference type="Pfam" id="PF00042">
    <property type="entry name" value="Globin"/>
    <property type="match status" value="1"/>
</dbReference>
<dbReference type="PRINTS" id="PR00814">
    <property type="entry name" value="BETAHAEM"/>
</dbReference>
<dbReference type="SUPFAM" id="SSF46458">
    <property type="entry name" value="Globin-like"/>
    <property type="match status" value="1"/>
</dbReference>
<dbReference type="PROSITE" id="PS01033">
    <property type="entry name" value="GLOBIN"/>
    <property type="match status" value="1"/>
</dbReference>
<reference key="1">
    <citation type="journal article" date="1988" name="Hemoglobin">
        <title>The primary structure of the hemoglobin beta-chain of the Turkish hamster (Mesocricetus brandti).</title>
        <authorList>
            <person name="Duffy L.K."/>
            <person name="Ehrhardt M.M."/>
        </authorList>
    </citation>
    <scope>PROTEIN SEQUENCE</scope>
</reference>
<evidence type="ECO:0000250" key="1">
    <source>
        <dbReference type="UniProtKB" id="P02086"/>
    </source>
</evidence>
<evidence type="ECO:0000250" key="2">
    <source>
        <dbReference type="UniProtKB" id="P68871"/>
    </source>
</evidence>
<evidence type="ECO:0000255" key="3">
    <source>
        <dbReference type="PROSITE-ProRule" id="PRU00238"/>
    </source>
</evidence>
<organism>
    <name type="scientific">Mesocricetus brandti</name>
    <name type="common">Brandt's hamster</name>
    <name type="synonym">Turkish hamster</name>
    <dbReference type="NCBI Taxonomy" id="10037"/>
    <lineage>
        <taxon>Eukaryota</taxon>
        <taxon>Metazoa</taxon>
        <taxon>Chordata</taxon>
        <taxon>Craniata</taxon>
        <taxon>Vertebrata</taxon>
        <taxon>Euteleostomi</taxon>
        <taxon>Mammalia</taxon>
        <taxon>Eutheria</taxon>
        <taxon>Euarchontoglires</taxon>
        <taxon>Glires</taxon>
        <taxon>Rodentia</taxon>
        <taxon>Myomorpha</taxon>
        <taxon>Muroidea</taxon>
        <taxon>Cricetidae</taxon>
        <taxon>Cricetinae</taxon>
        <taxon>Mesocricetus</taxon>
    </lineage>
</organism>
<comment type="function">
    <text>Involved in oxygen transport from the lung to the various peripheral tissues.</text>
</comment>
<comment type="subunit">
    <text>Heterotetramer of two alpha chains and two beta chains.</text>
</comment>
<comment type="tissue specificity">
    <text>Red blood cells.</text>
</comment>
<comment type="similarity">
    <text evidence="3">Belongs to the globin family.</text>
</comment>
<gene>
    <name type="primary">HBB</name>
</gene>
<name>HBB_MESBR</name>
<feature type="chain" id="PRO_0000053019" description="Hemoglobin subunit beta">
    <location>
        <begin position="1"/>
        <end position="146"/>
    </location>
</feature>
<feature type="domain" description="Globin" evidence="3">
    <location>
        <begin position="2"/>
        <end position="146"/>
    </location>
</feature>
<feature type="binding site" description="distal binding residue">
    <location>
        <position position="63"/>
    </location>
    <ligand>
        <name>heme b</name>
        <dbReference type="ChEBI" id="CHEBI:60344"/>
    </ligand>
    <ligandPart>
        <name>Fe</name>
        <dbReference type="ChEBI" id="CHEBI:18248"/>
    </ligandPart>
</feature>
<feature type="binding site" description="proximal binding residue">
    <location>
        <position position="92"/>
    </location>
    <ligand>
        <name>heme b</name>
        <dbReference type="ChEBI" id="CHEBI:60344"/>
    </ligand>
    <ligandPart>
        <name>Fe</name>
        <dbReference type="ChEBI" id="CHEBI:18248"/>
    </ligandPart>
</feature>
<feature type="modified residue" description="N-acetylvaline" evidence="1">
    <location>
        <position position="1"/>
    </location>
</feature>
<feature type="modified residue" description="N6-acetyllysine" evidence="2">
    <location>
        <position position="82"/>
    </location>
</feature>
<feature type="modified residue" description="S-nitrosocysteine" evidence="2">
    <location>
        <position position="93"/>
    </location>
</feature>
<feature type="modified residue" description="N6-acetyllysine" evidence="2">
    <location>
        <position position="144"/>
    </location>
</feature>
<keyword id="KW-0007">Acetylation</keyword>
<keyword id="KW-0903">Direct protein sequencing</keyword>
<keyword id="KW-0349">Heme</keyword>
<keyword id="KW-0408">Iron</keyword>
<keyword id="KW-0479">Metal-binding</keyword>
<keyword id="KW-0561">Oxygen transport</keyword>
<keyword id="KW-0702">S-nitrosylation</keyword>
<keyword id="KW-0813">Transport</keyword>
<sequence length="146" mass="15827">VHLTDAEKNLVSGLWGKVNADAVGAEALGRLLVVTPWTQRFFEHFGDLSSASAVMNNPQVKAHGKKVIHSFADGLKHLDNLKGAFSSLSELHCDKLHVDPENFKLLGNMIIIVLSHDLGKDFTPSAQSAFHKVVAGVANALAHKYH</sequence>
<protein>
    <recommendedName>
        <fullName>Hemoglobin subunit beta</fullName>
    </recommendedName>
    <alternativeName>
        <fullName>Beta-globin</fullName>
    </alternativeName>
    <alternativeName>
        <fullName>Hemoglobin beta chain</fullName>
    </alternativeName>
</protein>
<accession>P18707</accession>
<proteinExistence type="evidence at protein level"/>